<sequence length="261" mass="30740">MSRTSSQNQEIINNKHRLKTSKSSKPSKSSKPSKSSKPSKSSKTSKSSRSSGSKSSRSKTGKTSSRKDKYKEEYSQDQYPDEQEYEQEYEQEYEQEYQDNGEQTEEFVENNQDAYPEDIENDERQTQSNKELDTINKKTKERLKNKINKWMDHDDNIKRLNAKMKAFKDAKKQEEESIIKLIDKFEIGESKMDIRDDNKNLRGRVYKHKSVTKGAIKEDIIRDALMEVVRNERKVAELVKKIESKRPINERYYLKRTKGNN</sequence>
<feature type="chain" id="PRO_0000253272" description="Uncharacterized protein L491">
    <location>
        <begin position="1"/>
        <end position="261"/>
    </location>
</feature>
<feature type="region of interest" description="Disordered" evidence="2">
    <location>
        <begin position="1"/>
        <end position="139"/>
    </location>
</feature>
<feature type="coiled-coil region" evidence="1">
    <location>
        <begin position="151"/>
        <end position="181"/>
    </location>
</feature>
<feature type="coiled-coil region" evidence="1">
    <location>
        <begin position="218"/>
        <end position="243"/>
    </location>
</feature>
<feature type="compositionally biased region" description="Polar residues" evidence="2">
    <location>
        <begin position="1"/>
        <end position="12"/>
    </location>
</feature>
<feature type="compositionally biased region" description="Low complexity" evidence="2">
    <location>
        <begin position="23"/>
        <end position="55"/>
    </location>
</feature>
<feature type="compositionally biased region" description="Basic and acidic residues" evidence="2">
    <location>
        <begin position="65"/>
        <end position="74"/>
    </location>
</feature>
<feature type="compositionally biased region" description="Acidic residues" evidence="2">
    <location>
        <begin position="79"/>
        <end position="108"/>
    </location>
</feature>
<feature type="compositionally biased region" description="Basic and acidic residues" evidence="2">
    <location>
        <begin position="122"/>
        <end position="139"/>
    </location>
</feature>
<organismHost>
    <name type="scientific">Acanthamoeba polyphaga</name>
    <name type="common">Amoeba</name>
    <dbReference type="NCBI Taxonomy" id="5757"/>
</organismHost>
<protein>
    <recommendedName>
        <fullName>Uncharacterized protein L491</fullName>
    </recommendedName>
</protein>
<name>YL491_MIMIV</name>
<keyword id="KW-0175">Coiled coil</keyword>
<keyword id="KW-1185">Reference proteome</keyword>
<organism>
    <name type="scientific">Acanthamoeba polyphaga mimivirus</name>
    <name type="common">APMV</name>
    <dbReference type="NCBI Taxonomy" id="212035"/>
    <lineage>
        <taxon>Viruses</taxon>
        <taxon>Varidnaviria</taxon>
        <taxon>Bamfordvirae</taxon>
        <taxon>Nucleocytoviricota</taxon>
        <taxon>Megaviricetes</taxon>
        <taxon>Imitervirales</taxon>
        <taxon>Mimiviridae</taxon>
        <taxon>Megamimivirinae</taxon>
        <taxon>Mimivirus</taxon>
        <taxon>Mimivirus bradfordmassiliense</taxon>
    </lineage>
</organism>
<evidence type="ECO:0000255" key="1"/>
<evidence type="ECO:0000256" key="2">
    <source>
        <dbReference type="SAM" id="MobiDB-lite"/>
    </source>
</evidence>
<dbReference type="EMBL" id="AY653733">
    <property type="protein sequence ID" value="AAV50757.1"/>
    <property type="molecule type" value="Genomic_DNA"/>
</dbReference>
<dbReference type="SMR" id="Q5UQF5"/>
<dbReference type="KEGG" id="vg:9925121"/>
<dbReference type="OrthoDB" id="21532at10239"/>
<dbReference type="Proteomes" id="UP000001134">
    <property type="component" value="Genome"/>
</dbReference>
<dbReference type="InterPro" id="IPR043918">
    <property type="entry name" value="DUF5760"/>
</dbReference>
<dbReference type="Pfam" id="PF19064">
    <property type="entry name" value="DUF5760"/>
    <property type="match status" value="1"/>
</dbReference>
<accession>Q5UQF5</accession>
<reference key="1">
    <citation type="journal article" date="2004" name="Science">
        <title>The 1.2-megabase genome sequence of Mimivirus.</title>
        <authorList>
            <person name="Raoult D."/>
            <person name="Audic S."/>
            <person name="Robert C."/>
            <person name="Abergel C."/>
            <person name="Renesto P."/>
            <person name="Ogata H."/>
            <person name="La Scola B."/>
            <person name="Susan M."/>
            <person name="Claverie J.-M."/>
        </authorList>
    </citation>
    <scope>NUCLEOTIDE SEQUENCE [LARGE SCALE GENOMIC DNA]</scope>
    <source>
        <strain>Rowbotham-Bradford</strain>
    </source>
</reference>
<gene>
    <name type="ordered locus">MIMI_L491</name>
</gene>
<proteinExistence type="predicted"/>